<name>FIBA_VOMUR</name>
<reference evidence="3 4" key="1">
    <citation type="book" date="1968" name="Chemotaxonomy and serotaxonomy">
        <editorList>
            <person name="Hawkes J.G."/>
        </editorList>
        <authorList>
            <person name="Blombaeck B."/>
            <person name="Blombaeck M."/>
        </authorList>
    </citation>
    <scope>PROTEIN SEQUENCE</scope>
</reference>
<keyword id="KW-1064">Adaptive immunity</keyword>
<keyword id="KW-0094">Blood coagulation</keyword>
<keyword id="KW-0175">Coiled coil</keyword>
<keyword id="KW-0903">Direct protein sequencing</keyword>
<keyword id="KW-1015">Disulfide bond</keyword>
<keyword id="KW-0356">Hemostasis</keyword>
<keyword id="KW-0391">Immunity</keyword>
<keyword id="KW-0399">Innate immunity</keyword>
<keyword id="KW-1185">Reference proteome</keyword>
<keyword id="KW-0964">Secreted</keyword>
<protein>
    <recommendedName>
        <fullName>Fibrinogen alpha chain</fullName>
    </recommendedName>
    <component>
        <recommendedName>
            <fullName>Fibrinopeptide A</fullName>
        </recommendedName>
    </component>
</protein>
<accession>Q7M3I8</accession>
<organism>
    <name type="scientific">Vombatus ursinus</name>
    <name type="common">Common wombat</name>
    <dbReference type="NCBI Taxonomy" id="29139"/>
    <lineage>
        <taxon>Eukaryota</taxon>
        <taxon>Metazoa</taxon>
        <taxon>Chordata</taxon>
        <taxon>Craniata</taxon>
        <taxon>Vertebrata</taxon>
        <taxon>Euteleostomi</taxon>
        <taxon>Mammalia</taxon>
        <taxon>Metatheria</taxon>
        <taxon>Diprotodontia</taxon>
        <taxon>Vombatidae</taxon>
        <taxon>Vombatus</taxon>
    </lineage>
</organism>
<dbReference type="PIR" id="F29501">
    <property type="entry name" value="F29501"/>
</dbReference>
<dbReference type="Proteomes" id="UP000314987">
    <property type="component" value="Unassembled WGS sequence"/>
</dbReference>
<dbReference type="GO" id="GO:0005576">
    <property type="term" value="C:extracellular region"/>
    <property type="evidence" value="ECO:0007669"/>
    <property type="project" value="UniProtKB-SubCell"/>
</dbReference>
<dbReference type="GO" id="GO:0002250">
    <property type="term" value="P:adaptive immune response"/>
    <property type="evidence" value="ECO:0007669"/>
    <property type="project" value="UniProtKB-KW"/>
</dbReference>
<dbReference type="GO" id="GO:0007596">
    <property type="term" value="P:blood coagulation"/>
    <property type="evidence" value="ECO:0007669"/>
    <property type="project" value="UniProtKB-KW"/>
</dbReference>
<dbReference type="GO" id="GO:0045087">
    <property type="term" value="P:innate immune response"/>
    <property type="evidence" value="ECO:0007669"/>
    <property type="project" value="UniProtKB-KW"/>
</dbReference>
<comment type="function">
    <text evidence="1">Cleaved by the protease thrombin to yield monomers which, together with fibrinogen beta (FGB) and fibrinogen gamma (FGG), polymerize to form an insoluble fibrin matrix. Fibrin has a major function in hemostasis as one of the primary components of blood clots. In addition, functions during the early stages of wound repair to stabilize the lesion and guide cell migration during re-epithelialization. Was originally thought to be essential for platelet aggregation, based on in vitro studies using anticoagulated blood. However subsequent studies have shown that it is not absolutely required for thrombus formation in vivo. Enhances expression of SELP in activated platelets via an ITGB3-dependent pathway. Maternal fibrinogen is essential for successful pregnancy. Fibrin deposition is also associated with infection, where it protects against IFNG-mediated hemorrhage. May also facilitate the immune response via both innate and T-cell mediated pathways.</text>
</comment>
<comment type="subunit">
    <text evidence="2">Heterohexamer; disulfide linked. Contains 2 sets of 3 non-identical chains (alpha, beta and gamma). The 2 heterotrimers are in head to head conformation with the N-termini in a small central domain (By similarity).</text>
</comment>
<comment type="subcellular location">
    <subcellularLocation>
        <location>Secreted</location>
    </subcellularLocation>
</comment>
<comment type="domain">
    <text evidence="2">A long coiled coil structure formed by 3 polypeptide chains connects the central nodule to the C-terminal domains (distal nodules). The long C-terminal ends of the alpha chains fold back, contributing a fourth strand to the coiled coil structure.</text>
</comment>
<comment type="PTM">
    <text>Conversion of fibrinogen to fibrin is triggered by thrombin, which cleaves fibrinopeptides A and B from alpha and beta chains, and thus exposes the N-terminal polymerization sites responsible for the formation of the soft clot. The soft clot is converted into the hard clot by factor XIIIA which catalyzes the epsilon-(gamma-glutamyl)lysine cross-linking between gamma chains (stronger) and between alpha chains (weaker) of different monomers.</text>
</comment>
<comment type="PTM">
    <text>Forms F13A-mediated cross-links between a glutamine and the epsilon-amino group of a lysine residue, forming fibronectin-fibrinogen heteropolymers.</text>
</comment>
<evidence type="ECO:0000250" key="1">
    <source>
        <dbReference type="UniProtKB" id="E9PV24"/>
    </source>
</evidence>
<evidence type="ECO:0000250" key="2">
    <source>
        <dbReference type="UniProtKB" id="P02671"/>
    </source>
</evidence>
<evidence type="ECO:0000305" key="3"/>
<evidence type="ECO:0000312" key="4">
    <source>
        <dbReference type="PIR" id="F29501"/>
    </source>
</evidence>
<sequence length="15" mass="1509">TKTEGSFLAEGGGVR</sequence>
<proteinExistence type="evidence at protein level"/>
<gene>
    <name evidence="2" type="primary">FGA</name>
</gene>
<feature type="peptide" id="PRO_0000252049" description="Fibrinopeptide A">
    <location>
        <begin position="1"/>
        <end position="15"/>
    </location>
</feature>
<feature type="non-terminal residue" evidence="3">
    <location>
        <position position="15"/>
    </location>
</feature>